<feature type="chain" id="PRO_1000048520" description="DNA replication and repair protein RecF">
    <location>
        <begin position="1"/>
        <end position="365"/>
    </location>
</feature>
<feature type="binding site" evidence="1">
    <location>
        <begin position="30"/>
        <end position="37"/>
    </location>
    <ligand>
        <name>ATP</name>
        <dbReference type="ChEBI" id="CHEBI:30616"/>
    </ligand>
</feature>
<evidence type="ECO:0000255" key="1">
    <source>
        <dbReference type="HAMAP-Rule" id="MF_00365"/>
    </source>
</evidence>
<keyword id="KW-0067">ATP-binding</keyword>
<keyword id="KW-0963">Cytoplasm</keyword>
<keyword id="KW-0227">DNA damage</keyword>
<keyword id="KW-0234">DNA repair</keyword>
<keyword id="KW-0235">DNA replication</keyword>
<keyword id="KW-0238">DNA-binding</keyword>
<keyword id="KW-0547">Nucleotide-binding</keyword>
<keyword id="KW-1185">Reference proteome</keyword>
<keyword id="KW-0742">SOS response</keyword>
<protein>
    <recommendedName>
        <fullName evidence="1">DNA replication and repair protein RecF</fullName>
    </recommendedName>
</protein>
<gene>
    <name evidence="1" type="primary">recF</name>
    <name type="ordered locus">DSY0003</name>
</gene>
<reference key="1">
    <citation type="journal article" date="2006" name="J. Bacteriol.">
        <title>Complete genome sequence of the dehalorespiring bacterium Desulfitobacterium hafniense Y51 and comparison with Dehalococcoides ethenogenes 195.</title>
        <authorList>
            <person name="Nonaka H."/>
            <person name="Keresztes G."/>
            <person name="Shinoda Y."/>
            <person name="Ikenaga Y."/>
            <person name="Abe M."/>
            <person name="Naito K."/>
            <person name="Inatomi K."/>
            <person name="Furukawa K."/>
            <person name="Inui M."/>
            <person name="Yukawa H."/>
        </authorList>
    </citation>
    <scope>NUCLEOTIDE SEQUENCE [LARGE SCALE GENOMIC DNA]</scope>
    <source>
        <strain>Y51</strain>
    </source>
</reference>
<comment type="function">
    <text evidence="1">The RecF protein is involved in DNA metabolism; it is required for DNA replication and normal SOS inducibility. RecF binds preferentially to single-stranded, linear DNA. It also seems to bind ATP.</text>
</comment>
<comment type="subcellular location">
    <subcellularLocation>
        <location evidence="1">Cytoplasm</location>
    </subcellularLocation>
</comment>
<comment type="similarity">
    <text evidence="1">Belongs to the RecF family.</text>
</comment>
<proteinExistence type="inferred from homology"/>
<organism>
    <name type="scientific">Desulfitobacterium hafniense (strain Y51)</name>
    <dbReference type="NCBI Taxonomy" id="138119"/>
    <lineage>
        <taxon>Bacteria</taxon>
        <taxon>Bacillati</taxon>
        <taxon>Bacillota</taxon>
        <taxon>Clostridia</taxon>
        <taxon>Eubacteriales</taxon>
        <taxon>Desulfitobacteriaceae</taxon>
        <taxon>Desulfitobacterium</taxon>
    </lineage>
</organism>
<name>RECF_DESHY</name>
<accession>Q252K0</accession>
<dbReference type="EMBL" id="AP008230">
    <property type="protein sequence ID" value="BAE81792.1"/>
    <property type="molecule type" value="Genomic_DNA"/>
</dbReference>
<dbReference type="RefSeq" id="WP_005815135.1">
    <property type="nucleotide sequence ID" value="NC_007907.1"/>
</dbReference>
<dbReference type="SMR" id="Q252K0"/>
<dbReference type="STRING" id="138119.DSY0003"/>
<dbReference type="KEGG" id="dsy:DSY0003"/>
<dbReference type="eggNOG" id="COG1195">
    <property type="taxonomic scope" value="Bacteria"/>
</dbReference>
<dbReference type="HOGENOM" id="CLU_040267_0_1_9"/>
<dbReference type="Proteomes" id="UP000001946">
    <property type="component" value="Chromosome"/>
</dbReference>
<dbReference type="GO" id="GO:0005737">
    <property type="term" value="C:cytoplasm"/>
    <property type="evidence" value="ECO:0007669"/>
    <property type="project" value="UniProtKB-SubCell"/>
</dbReference>
<dbReference type="GO" id="GO:0005524">
    <property type="term" value="F:ATP binding"/>
    <property type="evidence" value="ECO:0007669"/>
    <property type="project" value="UniProtKB-UniRule"/>
</dbReference>
<dbReference type="GO" id="GO:0003697">
    <property type="term" value="F:single-stranded DNA binding"/>
    <property type="evidence" value="ECO:0007669"/>
    <property type="project" value="UniProtKB-UniRule"/>
</dbReference>
<dbReference type="GO" id="GO:0006260">
    <property type="term" value="P:DNA replication"/>
    <property type="evidence" value="ECO:0007669"/>
    <property type="project" value="UniProtKB-UniRule"/>
</dbReference>
<dbReference type="GO" id="GO:0000731">
    <property type="term" value="P:DNA synthesis involved in DNA repair"/>
    <property type="evidence" value="ECO:0007669"/>
    <property type="project" value="TreeGrafter"/>
</dbReference>
<dbReference type="GO" id="GO:0006302">
    <property type="term" value="P:double-strand break repair"/>
    <property type="evidence" value="ECO:0007669"/>
    <property type="project" value="TreeGrafter"/>
</dbReference>
<dbReference type="GO" id="GO:0009432">
    <property type="term" value="P:SOS response"/>
    <property type="evidence" value="ECO:0007669"/>
    <property type="project" value="UniProtKB-UniRule"/>
</dbReference>
<dbReference type="CDD" id="cd03242">
    <property type="entry name" value="ABC_RecF"/>
    <property type="match status" value="1"/>
</dbReference>
<dbReference type="Gene3D" id="3.40.50.300">
    <property type="entry name" value="P-loop containing nucleotide triphosphate hydrolases"/>
    <property type="match status" value="1"/>
</dbReference>
<dbReference type="Gene3D" id="1.20.1050.90">
    <property type="entry name" value="RecF/RecN/SMC, N-terminal domain"/>
    <property type="match status" value="1"/>
</dbReference>
<dbReference type="HAMAP" id="MF_00365">
    <property type="entry name" value="RecF"/>
    <property type="match status" value="1"/>
</dbReference>
<dbReference type="InterPro" id="IPR001238">
    <property type="entry name" value="DNA-binding_RecF"/>
</dbReference>
<dbReference type="InterPro" id="IPR018078">
    <property type="entry name" value="DNA-binding_RecF_CS"/>
</dbReference>
<dbReference type="InterPro" id="IPR027417">
    <property type="entry name" value="P-loop_NTPase"/>
</dbReference>
<dbReference type="InterPro" id="IPR003395">
    <property type="entry name" value="RecF/RecN/SMC_N"/>
</dbReference>
<dbReference type="InterPro" id="IPR042174">
    <property type="entry name" value="RecF_2"/>
</dbReference>
<dbReference type="NCBIfam" id="TIGR00611">
    <property type="entry name" value="recf"/>
    <property type="match status" value="1"/>
</dbReference>
<dbReference type="PANTHER" id="PTHR32182">
    <property type="entry name" value="DNA REPLICATION AND REPAIR PROTEIN RECF"/>
    <property type="match status" value="1"/>
</dbReference>
<dbReference type="PANTHER" id="PTHR32182:SF0">
    <property type="entry name" value="DNA REPLICATION AND REPAIR PROTEIN RECF"/>
    <property type="match status" value="1"/>
</dbReference>
<dbReference type="Pfam" id="PF02463">
    <property type="entry name" value="SMC_N"/>
    <property type="match status" value="1"/>
</dbReference>
<dbReference type="SUPFAM" id="SSF52540">
    <property type="entry name" value="P-loop containing nucleoside triphosphate hydrolases"/>
    <property type="match status" value="1"/>
</dbReference>
<dbReference type="PROSITE" id="PS00618">
    <property type="entry name" value="RECF_2"/>
    <property type="match status" value="1"/>
</dbReference>
<sequence length="365" mass="42512">MEIKWLHLKSFRNYQDQEVDFRPGLTILQGENGQGKTNILEGIYYLLTGKSYRVHREQELARWGENEFHLYGDFIVQRRKLRLESHYQDKRKIIKINQIPCRKLSEYVGTINVVFFSPDDLVMVKGGPAERRRFLDLHIAQHHSKHIQLLNAYNKVLQQKNALLKQGQGGSKSQIAQIELWNEQILRIGSEIIRNRWEFTGLLSRKGQEIYGQISSGKEELTMDYHALGKNNLEEALAAFPKLLAEKMSLEMERKMVLIGPHRDDILFKLNERSARLYGSQGQQRSIVLSTKLAELEVIRQEKGDYPLLLLDDVLSELDRFRRDYLLDYTKSLQQTIMTMTSAETLTQRASLLLKVEKGQIGRIE</sequence>